<organism>
    <name type="scientific">Staphylococcus aureus (strain JH9)</name>
    <dbReference type="NCBI Taxonomy" id="359786"/>
    <lineage>
        <taxon>Bacteria</taxon>
        <taxon>Bacillati</taxon>
        <taxon>Bacillota</taxon>
        <taxon>Bacilli</taxon>
        <taxon>Bacillales</taxon>
        <taxon>Staphylococcaceae</taxon>
        <taxon>Staphylococcus</taxon>
    </lineage>
</organism>
<protein>
    <recommendedName>
        <fullName evidence="1">Ribosomal RNA small subunit methyltransferase H</fullName>
        <ecNumber evidence="1">2.1.1.199</ecNumber>
    </recommendedName>
    <alternativeName>
        <fullName evidence="1">16S rRNA m(4)C1402 methyltransferase</fullName>
    </alternativeName>
    <alternativeName>
        <fullName evidence="1">rRNA (cytosine-N(4)-)-methyltransferase RsmH</fullName>
    </alternativeName>
</protein>
<feature type="chain" id="PRO_0000387136" description="Ribosomal RNA small subunit methyltransferase H">
    <location>
        <begin position="1"/>
        <end position="311"/>
    </location>
</feature>
<feature type="binding site" evidence="1">
    <location>
        <begin position="32"/>
        <end position="34"/>
    </location>
    <ligand>
        <name>S-adenosyl-L-methionine</name>
        <dbReference type="ChEBI" id="CHEBI:59789"/>
    </ligand>
</feature>
<feature type="binding site" evidence="1">
    <location>
        <position position="52"/>
    </location>
    <ligand>
        <name>S-adenosyl-L-methionine</name>
        <dbReference type="ChEBI" id="CHEBI:59789"/>
    </ligand>
</feature>
<feature type="binding site" evidence="1">
    <location>
        <position position="79"/>
    </location>
    <ligand>
        <name>S-adenosyl-L-methionine</name>
        <dbReference type="ChEBI" id="CHEBI:59789"/>
    </ligand>
</feature>
<feature type="binding site" evidence="1">
    <location>
        <position position="100"/>
    </location>
    <ligand>
        <name>S-adenosyl-L-methionine</name>
        <dbReference type="ChEBI" id="CHEBI:59789"/>
    </ligand>
</feature>
<feature type="binding site" evidence="1">
    <location>
        <position position="107"/>
    </location>
    <ligand>
        <name>S-adenosyl-L-methionine</name>
        <dbReference type="ChEBI" id="CHEBI:59789"/>
    </ligand>
</feature>
<proteinExistence type="inferred from homology"/>
<comment type="function">
    <text evidence="1">Specifically methylates the N4 position of cytidine in position 1402 (C1402) of 16S rRNA.</text>
</comment>
<comment type="catalytic activity">
    <reaction evidence="1">
        <text>cytidine(1402) in 16S rRNA + S-adenosyl-L-methionine = N(4)-methylcytidine(1402) in 16S rRNA + S-adenosyl-L-homocysteine + H(+)</text>
        <dbReference type="Rhea" id="RHEA:42928"/>
        <dbReference type="Rhea" id="RHEA-COMP:10286"/>
        <dbReference type="Rhea" id="RHEA-COMP:10287"/>
        <dbReference type="ChEBI" id="CHEBI:15378"/>
        <dbReference type="ChEBI" id="CHEBI:57856"/>
        <dbReference type="ChEBI" id="CHEBI:59789"/>
        <dbReference type="ChEBI" id="CHEBI:74506"/>
        <dbReference type="ChEBI" id="CHEBI:82748"/>
        <dbReference type="EC" id="2.1.1.199"/>
    </reaction>
</comment>
<comment type="subcellular location">
    <subcellularLocation>
        <location evidence="1">Cytoplasm</location>
    </subcellularLocation>
</comment>
<comment type="similarity">
    <text evidence="1">Belongs to the methyltransferase superfamily. RsmH family.</text>
</comment>
<reference key="1">
    <citation type="submission" date="2007-05" db="EMBL/GenBank/DDBJ databases">
        <title>Complete sequence of chromosome of Staphylococcus aureus subsp. aureus JH9.</title>
        <authorList>
            <consortium name="US DOE Joint Genome Institute"/>
            <person name="Copeland A."/>
            <person name="Lucas S."/>
            <person name="Lapidus A."/>
            <person name="Barry K."/>
            <person name="Detter J.C."/>
            <person name="Glavina del Rio T."/>
            <person name="Hammon N."/>
            <person name="Israni S."/>
            <person name="Pitluck S."/>
            <person name="Chain P."/>
            <person name="Malfatti S."/>
            <person name="Shin M."/>
            <person name="Vergez L."/>
            <person name="Schmutz J."/>
            <person name="Larimer F."/>
            <person name="Land M."/>
            <person name="Hauser L."/>
            <person name="Kyrpides N."/>
            <person name="Kim E."/>
            <person name="Tomasz A."/>
            <person name="Richardson P."/>
        </authorList>
    </citation>
    <scope>NUCLEOTIDE SEQUENCE [LARGE SCALE GENOMIC DNA]</scope>
    <source>
        <strain>JH9</strain>
    </source>
</reference>
<evidence type="ECO:0000255" key="1">
    <source>
        <dbReference type="HAMAP-Rule" id="MF_01007"/>
    </source>
</evidence>
<keyword id="KW-0963">Cytoplasm</keyword>
<keyword id="KW-0489">Methyltransferase</keyword>
<keyword id="KW-0698">rRNA processing</keyword>
<keyword id="KW-0949">S-adenosyl-L-methionine</keyword>
<keyword id="KW-0808">Transferase</keyword>
<dbReference type="EC" id="2.1.1.199" evidence="1"/>
<dbReference type="EMBL" id="CP000703">
    <property type="protein sequence ID" value="ABQ49038.1"/>
    <property type="molecule type" value="Genomic_DNA"/>
</dbReference>
<dbReference type="RefSeq" id="WP_000468384.1">
    <property type="nucleotide sequence ID" value="NC_009487.1"/>
</dbReference>
<dbReference type="SMR" id="A5IS65"/>
<dbReference type="KEGG" id="saj:SaurJH9_1238"/>
<dbReference type="HOGENOM" id="CLU_038422_2_0_9"/>
<dbReference type="GO" id="GO:0005737">
    <property type="term" value="C:cytoplasm"/>
    <property type="evidence" value="ECO:0007669"/>
    <property type="project" value="UniProtKB-SubCell"/>
</dbReference>
<dbReference type="GO" id="GO:0071424">
    <property type="term" value="F:rRNA (cytosine-N4-)-methyltransferase activity"/>
    <property type="evidence" value="ECO:0007669"/>
    <property type="project" value="UniProtKB-UniRule"/>
</dbReference>
<dbReference type="GO" id="GO:0070475">
    <property type="term" value="P:rRNA base methylation"/>
    <property type="evidence" value="ECO:0007669"/>
    <property type="project" value="UniProtKB-UniRule"/>
</dbReference>
<dbReference type="FunFam" id="1.10.150.170:FF:000001">
    <property type="entry name" value="Ribosomal RNA small subunit methyltransferase H"/>
    <property type="match status" value="1"/>
</dbReference>
<dbReference type="Gene3D" id="1.10.150.170">
    <property type="entry name" value="Putative methyltransferase TM0872, insert domain"/>
    <property type="match status" value="1"/>
</dbReference>
<dbReference type="Gene3D" id="3.40.50.150">
    <property type="entry name" value="Vaccinia Virus protein VP39"/>
    <property type="match status" value="1"/>
</dbReference>
<dbReference type="HAMAP" id="MF_01007">
    <property type="entry name" value="16SrRNA_methyltr_H"/>
    <property type="match status" value="1"/>
</dbReference>
<dbReference type="InterPro" id="IPR002903">
    <property type="entry name" value="RsmH"/>
</dbReference>
<dbReference type="InterPro" id="IPR023397">
    <property type="entry name" value="SAM-dep_MeTrfase_MraW_recog"/>
</dbReference>
<dbReference type="InterPro" id="IPR029063">
    <property type="entry name" value="SAM-dependent_MTases_sf"/>
</dbReference>
<dbReference type="NCBIfam" id="TIGR00006">
    <property type="entry name" value="16S rRNA (cytosine(1402)-N(4))-methyltransferase RsmH"/>
    <property type="match status" value="1"/>
</dbReference>
<dbReference type="PANTHER" id="PTHR11265:SF0">
    <property type="entry name" value="12S RRNA N4-METHYLCYTIDINE METHYLTRANSFERASE"/>
    <property type="match status" value="1"/>
</dbReference>
<dbReference type="PANTHER" id="PTHR11265">
    <property type="entry name" value="S-ADENOSYL-METHYLTRANSFERASE MRAW"/>
    <property type="match status" value="1"/>
</dbReference>
<dbReference type="Pfam" id="PF01795">
    <property type="entry name" value="Methyltransf_5"/>
    <property type="match status" value="1"/>
</dbReference>
<dbReference type="PIRSF" id="PIRSF004486">
    <property type="entry name" value="MraW"/>
    <property type="match status" value="1"/>
</dbReference>
<dbReference type="SUPFAM" id="SSF81799">
    <property type="entry name" value="Putative methyltransferase TM0872, insert domain"/>
    <property type="match status" value="1"/>
</dbReference>
<dbReference type="SUPFAM" id="SSF53335">
    <property type="entry name" value="S-adenosyl-L-methionine-dependent methyltransferases"/>
    <property type="match status" value="1"/>
</dbReference>
<sequence length="311" mass="35682">MFHHISVMLNETIDYLNVKENGVYIDCTLGGAGHALYLLNQLNDDGRLIAIDQDQTAIDNAKEVLKDHLHKVTFVHSNFRELTQILKDLNIEKVDGIYYDLGVSSPQLDIPERGFSYHHDATLDMRMDQTQELTAYEIVNNWSYEALVKIFYRYGEEKFSKQIARRIEAHREQQPITTTLELVDIIKEGIPAKARRKGGHPAKRVFQALRIAVNDELSAFEDSIEQAIELVKVDGRISVITFHSLEDRLCKQVFQEYEKGPEVPRGLPVIPEAYTPKLKRVNRKPITATEEDLDDNNRARSAKLRVAEILK</sequence>
<accession>A5IS65</accession>
<name>RSMH_STAA9</name>
<gene>
    <name evidence="1" type="primary">rsmH</name>
    <name type="synonym">mraW</name>
    <name type="ordered locus">SaurJH9_1238</name>
</gene>